<accession>A6TDD9</accession>
<comment type="function">
    <text evidence="2">Involved in 1,2-propanediol (1,2-PD) utilization within the bacterial microcompartment (BMC) dedicated to 1,2-PD degradation by catalyzing the conversion of propanoyl-CoA to propanoyl-phosphate.</text>
</comment>
<comment type="catalytic activity">
    <reaction evidence="2">
        <text>propanoyl-CoA + phosphate = propanoyl phosphate + CoA</text>
        <dbReference type="Rhea" id="RHEA:28046"/>
        <dbReference type="ChEBI" id="CHEBI:43474"/>
        <dbReference type="ChEBI" id="CHEBI:57287"/>
        <dbReference type="ChEBI" id="CHEBI:57392"/>
        <dbReference type="ChEBI" id="CHEBI:58933"/>
        <dbReference type="EC" id="2.3.1.222"/>
    </reaction>
</comment>
<comment type="cofactor">
    <cofactor evidence="1">
        <name>Zn(2+)</name>
        <dbReference type="ChEBI" id="CHEBI:29105"/>
    </cofactor>
    <text evidence="1">There are 2 Zn(2+) ions per monomer; Zn(2+) and CoA bind inbetween the 2 domains in each monomer.</text>
</comment>
<comment type="pathway">
    <text>Polyol metabolism; 1,2-propanediol degradation.</text>
</comment>
<comment type="subcellular location">
    <subcellularLocation>
        <location evidence="2">Bacterial microcompartment</location>
    </subcellularLocation>
</comment>
<comment type="domain">
    <text evidence="1">Formed by 2 beta-barrels, each is capped on both ends by short alpha-helices.</text>
</comment>
<comment type="similarity">
    <text evidence="3">Belongs to the PduL family.</text>
</comment>
<proteinExistence type="inferred from homology"/>
<name>PDUL_KLEP7</name>
<sequence length="210" mass="22705">MDKQQLASTVNKVLDEMRQRPIPIGISSRHIHLAAADYARLFPAQPIQPKKALLQPGQYAAEQTVTLVGPKGRLNNVRLLGPLRQTSQVEISRTDARILGIAAPLRMSGNLQGTPGIRLISPFAELELSGGTIVAQRHIHMSPLDALILRVSHGDSVAVAIEGSDRRLIFDNVAVRVAPDMRLEMHIDTDEANAAGADAAQAWATLVTKP</sequence>
<reference key="1">
    <citation type="submission" date="2006-09" db="EMBL/GenBank/DDBJ databases">
        <authorList>
            <consortium name="The Klebsiella pneumonia Genome Sequencing Project"/>
            <person name="McClelland M."/>
            <person name="Sanderson E.K."/>
            <person name="Spieth J."/>
            <person name="Clifton W.S."/>
            <person name="Latreille P."/>
            <person name="Sabo A."/>
            <person name="Pepin K."/>
            <person name="Bhonagiri V."/>
            <person name="Porwollik S."/>
            <person name="Ali J."/>
            <person name="Wilson R.K."/>
        </authorList>
    </citation>
    <scope>NUCLEOTIDE SEQUENCE [LARGE SCALE GENOMIC DNA]</scope>
    <source>
        <strain>ATCC 700721 / MGH 78578</strain>
    </source>
</reference>
<dbReference type="EC" id="2.3.1.222"/>
<dbReference type="EMBL" id="CP000647">
    <property type="protein sequence ID" value="ABR78610.1"/>
    <property type="molecule type" value="Genomic_DNA"/>
</dbReference>
<dbReference type="RefSeq" id="WP_002915810.1">
    <property type="nucleotide sequence ID" value="NC_009648.1"/>
</dbReference>
<dbReference type="SMR" id="A6TDD9"/>
<dbReference type="STRING" id="272620.KPN_03212"/>
<dbReference type="PaxDb" id="272620-KPN_03212"/>
<dbReference type="EnsemblBacteria" id="ABR78610">
    <property type="protein sequence ID" value="ABR78610"/>
    <property type="gene ID" value="KPN_03212"/>
</dbReference>
<dbReference type="KEGG" id="kpn:KPN_03212"/>
<dbReference type="HOGENOM" id="CLU_080676_0_0_6"/>
<dbReference type="UniPathway" id="UPA00621"/>
<dbReference type="Proteomes" id="UP000000265">
    <property type="component" value="Chromosome"/>
</dbReference>
<dbReference type="GO" id="GO:0031469">
    <property type="term" value="C:bacterial microcompartment"/>
    <property type="evidence" value="ECO:0007669"/>
    <property type="project" value="UniProtKB-SubCell"/>
</dbReference>
<dbReference type="GO" id="GO:0016747">
    <property type="term" value="F:acyltransferase activity, transferring groups other than amino-acyl groups"/>
    <property type="evidence" value="ECO:0007669"/>
    <property type="project" value="InterPro"/>
</dbReference>
<dbReference type="GO" id="GO:0046872">
    <property type="term" value="F:metal ion binding"/>
    <property type="evidence" value="ECO:0007669"/>
    <property type="project" value="UniProtKB-KW"/>
</dbReference>
<dbReference type="GO" id="GO:0051144">
    <property type="term" value="P:propanediol catabolic process"/>
    <property type="evidence" value="ECO:0007669"/>
    <property type="project" value="UniProtKB-UniPathway"/>
</dbReference>
<dbReference type="InterPro" id="IPR008300">
    <property type="entry name" value="PTAC"/>
</dbReference>
<dbReference type="NCBIfam" id="NF011652">
    <property type="entry name" value="PRK15070.1"/>
    <property type="match status" value="1"/>
</dbReference>
<dbReference type="PANTHER" id="PTHR39453">
    <property type="entry name" value="PHOSPHATE PROPANOYLTRANSFERASE"/>
    <property type="match status" value="1"/>
</dbReference>
<dbReference type="PANTHER" id="PTHR39453:SF1">
    <property type="entry name" value="PHOSPHATE PROPANOYLTRANSFERASE"/>
    <property type="match status" value="1"/>
</dbReference>
<dbReference type="Pfam" id="PF06130">
    <property type="entry name" value="PTAC"/>
    <property type="match status" value="1"/>
</dbReference>
<dbReference type="PIRSF" id="PIRSF010130">
    <property type="entry name" value="PduL"/>
    <property type="match status" value="1"/>
</dbReference>
<protein>
    <recommendedName>
        <fullName>Phosphate propanoyltransferase</fullName>
        <ecNumber>2.3.1.222</ecNumber>
    </recommendedName>
    <alternativeName>
        <fullName>Phosphate acyltransferase PduL</fullName>
    </alternativeName>
    <alternativeName>
        <fullName>Phosphotransacylase PduL</fullName>
        <shortName>PTAC</shortName>
    </alternativeName>
    <alternativeName>
        <fullName>Propanediol utilization protein PduL</fullName>
    </alternativeName>
</protein>
<feature type="chain" id="PRO_0000407702" description="Phosphate propanoyltransferase">
    <location>
        <begin position="1"/>
        <end position="210"/>
    </location>
</feature>
<feature type="binding site" evidence="1">
    <location>
        <begin position="26"/>
        <end position="28"/>
    </location>
    <ligand>
        <name>CoA</name>
        <dbReference type="ChEBI" id="CHEBI:57287"/>
    </ligand>
</feature>
<feature type="binding site" evidence="1">
    <location>
        <position position="30"/>
    </location>
    <ligand>
        <name>Zn(2+)</name>
        <dbReference type="ChEBI" id="CHEBI:29105"/>
        <label>1</label>
    </ligand>
</feature>
<feature type="binding site" evidence="1">
    <location>
        <position position="32"/>
    </location>
    <ligand>
        <name>Zn(2+)</name>
        <dbReference type="ChEBI" id="CHEBI:29105"/>
        <label>1</label>
    </ligand>
</feature>
<feature type="binding site" evidence="1">
    <location>
        <position position="71"/>
    </location>
    <ligand>
        <name>CoA</name>
        <dbReference type="ChEBI" id="CHEBI:57287"/>
    </ligand>
</feature>
<feature type="binding site" evidence="1">
    <location>
        <position position="78"/>
    </location>
    <ligand>
        <name>CoA</name>
        <dbReference type="ChEBI" id="CHEBI:57287"/>
    </ligand>
</feature>
<feature type="binding site" evidence="1">
    <location>
        <position position="84"/>
    </location>
    <ligand>
        <name>phosphate</name>
        <dbReference type="ChEBI" id="CHEBI:43474"/>
    </ligand>
</feature>
<feature type="binding site" evidence="1">
    <location>
        <position position="90"/>
    </location>
    <ligand>
        <name>Zn(2+)</name>
        <dbReference type="ChEBI" id="CHEBI:29105"/>
        <label>1</label>
    </ligand>
</feature>
<feature type="binding site" evidence="1">
    <location>
        <position position="138"/>
    </location>
    <ligand>
        <name>Zn(2+)</name>
        <dbReference type="ChEBI" id="CHEBI:29105"/>
        <label>2</label>
    </ligand>
</feature>
<feature type="binding site" evidence="1">
    <location>
        <position position="140"/>
    </location>
    <ligand>
        <name>Zn(2+)</name>
        <dbReference type="ChEBI" id="CHEBI:29105"/>
        <label>2</label>
    </ligand>
</feature>
<feature type="binding site" evidence="1">
    <location>
        <position position="186"/>
    </location>
    <ligand>
        <name>Zn(2+)</name>
        <dbReference type="ChEBI" id="CHEBI:29105"/>
        <label>2</label>
    </ligand>
</feature>
<feature type="binding site" evidence="1">
    <location>
        <position position="193"/>
    </location>
    <ligand>
        <name>CoA</name>
        <dbReference type="ChEBI" id="CHEBI:57287"/>
    </ligand>
</feature>
<organism>
    <name type="scientific">Klebsiella pneumoniae subsp. pneumoniae (strain ATCC 700721 / MGH 78578)</name>
    <dbReference type="NCBI Taxonomy" id="272620"/>
    <lineage>
        <taxon>Bacteria</taxon>
        <taxon>Pseudomonadati</taxon>
        <taxon>Pseudomonadota</taxon>
        <taxon>Gammaproteobacteria</taxon>
        <taxon>Enterobacterales</taxon>
        <taxon>Enterobacteriaceae</taxon>
        <taxon>Klebsiella/Raoultella group</taxon>
        <taxon>Klebsiella</taxon>
        <taxon>Klebsiella pneumoniae complex</taxon>
    </lineage>
</organism>
<keyword id="KW-0012">Acyltransferase</keyword>
<keyword id="KW-1283">Bacterial microcompartment</keyword>
<keyword id="KW-0479">Metal-binding</keyword>
<keyword id="KW-0808">Transferase</keyword>
<keyword id="KW-0862">Zinc</keyword>
<evidence type="ECO:0000250" key="1">
    <source>
        <dbReference type="UniProtKB" id="Q21A54"/>
    </source>
</evidence>
<evidence type="ECO:0000250" key="2">
    <source>
        <dbReference type="UniProtKB" id="Q9XDN5"/>
    </source>
</evidence>
<evidence type="ECO:0000305" key="3"/>
<gene>
    <name type="primary">pduL</name>
    <name type="ordered locus">KPN78578_31490</name>
    <name type="ORF">KPN_03212</name>
</gene>